<proteinExistence type="inferred from homology"/>
<organism>
    <name type="scientific">Bacillus cereus (strain G9842)</name>
    <dbReference type="NCBI Taxonomy" id="405531"/>
    <lineage>
        <taxon>Bacteria</taxon>
        <taxon>Bacillati</taxon>
        <taxon>Bacillota</taxon>
        <taxon>Bacilli</taxon>
        <taxon>Bacillales</taxon>
        <taxon>Bacillaceae</taxon>
        <taxon>Bacillus</taxon>
        <taxon>Bacillus cereus group</taxon>
    </lineage>
</organism>
<comment type="function">
    <text evidence="1">Catalyzes the irreversible cleavage of the glycosidic bond in both 5'-methylthioadenosine (MTA) and S-adenosylhomocysteine (SAH/AdoHcy) to adenine and the corresponding thioribose, 5'-methylthioribose and S-ribosylhomocysteine, respectively. Also cleaves 5'-deoxyadenosine, a toxic by-product of radical S-adenosylmethionine (SAM) enzymes, into 5-deoxyribose and adenine.</text>
</comment>
<comment type="catalytic activity">
    <reaction evidence="1">
        <text>S-adenosyl-L-homocysteine + H2O = S-(5-deoxy-D-ribos-5-yl)-L-homocysteine + adenine</text>
        <dbReference type="Rhea" id="RHEA:17805"/>
        <dbReference type="ChEBI" id="CHEBI:15377"/>
        <dbReference type="ChEBI" id="CHEBI:16708"/>
        <dbReference type="ChEBI" id="CHEBI:57856"/>
        <dbReference type="ChEBI" id="CHEBI:58195"/>
        <dbReference type="EC" id="3.2.2.9"/>
    </reaction>
</comment>
<comment type="catalytic activity">
    <reaction evidence="1">
        <text>S-methyl-5'-thioadenosine + H2O = 5-(methylsulfanyl)-D-ribose + adenine</text>
        <dbReference type="Rhea" id="RHEA:13617"/>
        <dbReference type="ChEBI" id="CHEBI:15377"/>
        <dbReference type="ChEBI" id="CHEBI:16708"/>
        <dbReference type="ChEBI" id="CHEBI:17509"/>
        <dbReference type="ChEBI" id="CHEBI:78440"/>
        <dbReference type="EC" id="3.2.2.9"/>
    </reaction>
</comment>
<comment type="catalytic activity">
    <reaction evidence="1">
        <text>5'-deoxyadenosine + H2O = 5-deoxy-D-ribose + adenine</text>
        <dbReference type="Rhea" id="RHEA:29859"/>
        <dbReference type="ChEBI" id="CHEBI:15377"/>
        <dbReference type="ChEBI" id="CHEBI:16708"/>
        <dbReference type="ChEBI" id="CHEBI:17319"/>
        <dbReference type="ChEBI" id="CHEBI:149540"/>
        <dbReference type="EC" id="3.2.2.9"/>
    </reaction>
    <physiologicalReaction direction="left-to-right" evidence="1">
        <dbReference type="Rhea" id="RHEA:29860"/>
    </physiologicalReaction>
</comment>
<comment type="pathway">
    <text evidence="1">Amino-acid biosynthesis; L-methionine biosynthesis via salvage pathway; S-methyl-5-thio-alpha-D-ribose 1-phosphate from S-methyl-5'-thioadenosine (hydrolase route): step 1/2.</text>
</comment>
<comment type="similarity">
    <text evidence="1">Belongs to the PNP/UDP phosphorylase family. MtnN subfamily.</text>
</comment>
<reference key="1">
    <citation type="submission" date="2008-10" db="EMBL/GenBank/DDBJ databases">
        <title>Genome sequence of Bacillus cereus G9842.</title>
        <authorList>
            <person name="Dodson R.J."/>
            <person name="Durkin A.S."/>
            <person name="Rosovitz M.J."/>
            <person name="Rasko D.A."/>
            <person name="Hoffmaster A."/>
            <person name="Ravel J."/>
            <person name="Sutton G."/>
        </authorList>
    </citation>
    <scope>NUCLEOTIDE SEQUENCE [LARGE SCALE GENOMIC DNA]</scope>
    <source>
        <strain>G9842</strain>
    </source>
</reference>
<keyword id="KW-0028">Amino-acid biosynthesis</keyword>
<keyword id="KW-0378">Hydrolase</keyword>
<keyword id="KW-0486">Methionine biosynthesis</keyword>
<dbReference type="EC" id="3.2.2.9" evidence="1"/>
<dbReference type="EMBL" id="CP001186">
    <property type="protein sequence ID" value="ACK97403.1"/>
    <property type="molecule type" value="Genomic_DNA"/>
</dbReference>
<dbReference type="RefSeq" id="WP_001217027.1">
    <property type="nucleotide sequence ID" value="NC_011772.1"/>
</dbReference>
<dbReference type="SMR" id="B7IYM7"/>
<dbReference type="GeneID" id="72451054"/>
<dbReference type="KEGG" id="bcg:BCG9842_B0743"/>
<dbReference type="HOGENOM" id="CLU_031248_2_2_9"/>
<dbReference type="UniPathway" id="UPA00904">
    <property type="reaction ID" value="UER00871"/>
</dbReference>
<dbReference type="Proteomes" id="UP000006744">
    <property type="component" value="Chromosome"/>
</dbReference>
<dbReference type="GO" id="GO:0005829">
    <property type="term" value="C:cytosol"/>
    <property type="evidence" value="ECO:0007669"/>
    <property type="project" value="TreeGrafter"/>
</dbReference>
<dbReference type="GO" id="GO:0008782">
    <property type="term" value="F:adenosylhomocysteine nucleosidase activity"/>
    <property type="evidence" value="ECO:0007669"/>
    <property type="project" value="UniProtKB-UniRule"/>
</dbReference>
<dbReference type="GO" id="GO:0008930">
    <property type="term" value="F:methylthioadenosine nucleosidase activity"/>
    <property type="evidence" value="ECO:0007669"/>
    <property type="project" value="UniProtKB-UniRule"/>
</dbReference>
<dbReference type="GO" id="GO:0019509">
    <property type="term" value="P:L-methionine salvage from methylthioadenosine"/>
    <property type="evidence" value="ECO:0007669"/>
    <property type="project" value="UniProtKB-UniRule"/>
</dbReference>
<dbReference type="GO" id="GO:0019284">
    <property type="term" value="P:L-methionine salvage from S-adenosylmethionine"/>
    <property type="evidence" value="ECO:0007669"/>
    <property type="project" value="TreeGrafter"/>
</dbReference>
<dbReference type="GO" id="GO:0009164">
    <property type="term" value="P:nucleoside catabolic process"/>
    <property type="evidence" value="ECO:0007669"/>
    <property type="project" value="InterPro"/>
</dbReference>
<dbReference type="CDD" id="cd09008">
    <property type="entry name" value="MTAN"/>
    <property type="match status" value="1"/>
</dbReference>
<dbReference type="FunFam" id="3.40.50.1580:FF:000001">
    <property type="entry name" value="MTA/SAH nucleosidase family protein"/>
    <property type="match status" value="1"/>
</dbReference>
<dbReference type="Gene3D" id="3.40.50.1580">
    <property type="entry name" value="Nucleoside phosphorylase domain"/>
    <property type="match status" value="1"/>
</dbReference>
<dbReference type="HAMAP" id="MF_01684">
    <property type="entry name" value="Salvage_MtnN"/>
    <property type="match status" value="1"/>
</dbReference>
<dbReference type="InterPro" id="IPR010049">
    <property type="entry name" value="MTA_SAH_Nsdase"/>
</dbReference>
<dbReference type="InterPro" id="IPR000845">
    <property type="entry name" value="Nucleoside_phosphorylase_d"/>
</dbReference>
<dbReference type="InterPro" id="IPR035994">
    <property type="entry name" value="Nucleoside_phosphorylase_sf"/>
</dbReference>
<dbReference type="NCBIfam" id="TIGR01704">
    <property type="entry name" value="MTA_SAH-Nsdase"/>
    <property type="match status" value="1"/>
</dbReference>
<dbReference type="NCBIfam" id="NF004079">
    <property type="entry name" value="PRK05584.1"/>
    <property type="match status" value="1"/>
</dbReference>
<dbReference type="PANTHER" id="PTHR46832">
    <property type="entry name" value="5'-METHYLTHIOADENOSINE/S-ADENOSYLHOMOCYSTEINE NUCLEOSIDASE"/>
    <property type="match status" value="1"/>
</dbReference>
<dbReference type="PANTHER" id="PTHR46832:SF1">
    <property type="entry name" value="5'-METHYLTHIOADENOSINE_S-ADENOSYLHOMOCYSTEINE NUCLEOSIDASE"/>
    <property type="match status" value="1"/>
</dbReference>
<dbReference type="Pfam" id="PF01048">
    <property type="entry name" value="PNP_UDP_1"/>
    <property type="match status" value="1"/>
</dbReference>
<dbReference type="SUPFAM" id="SSF53167">
    <property type="entry name" value="Purine and uridine phosphorylases"/>
    <property type="match status" value="1"/>
</dbReference>
<name>MTNN_BACC2</name>
<sequence>MRIAVIGAMEEEVRILRDKLEQAETETVAGCEFTKGLLAGHEVILLKSGIGKVNAAMSTTILLEKYKPEKVINTGSAGGFHHSLNVGDVVISTEVRHHDVDVTAFNYEYGQVPGMPPGFKADEALVALAEKCMQTEENIQVVKGMIATGDSFMSDPNRVAAIRDKFENLYAVEMEAAAVAQVCHQYEVPFVIIRALSDIAGKESNVSFDQFLDQAALHSTNFIVKVLEELK</sequence>
<protein>
    <recommendedName>
        <fullName evidence="1">5'-methylthioadenosine/S-adenosylhomocysteine nucleosidase</fullName>
        <shortName evidence="1">MTA/SAH nucleosidase</shortName>
        <shortName evidence="1">MTAN</shortName>
        <ecNumber evidence="1">3.2.2.9</ecNumber>
    </recommendedName>
    <alternativeName>
        <fullName evidence="1">5'-deoxyadenosine nucleosidase</fullName>
        <shortName evidence="1">DOA nucleosidase</shortName>
        <shortName evidence="1">dAdo nucleosidase</shortName>
    </alternativeName>
    <alternativeName>
        <fullName evidence="1">5'-methylthioadenosine nucleosidase</fullName>
        <shortName evidence="1">MTA nucleosidase</shortName>
    </alternativeName>
    <alternativeName>
        <fullName evidence="1">S-adenosylhomocysteine nucleosidase</fullName>
        <shortName evidence="1">AdoHcy nucleosidase</shortName>
        <shortName evidence="1">SAH nucleosidase</shortName>
        <shortName evidence="1">SRH nucleosidase</shortName>
    </alternativeName>
</protein>
<gene>
    <name evidence="1" type="primary">mtnN</name>
    <name type="ordered locus">BCG9842_B0743</name>
</gene>
<accession>B7IYM7</accession>
<feature type="chain" id="PRO_1000187410" description="5'-methylthioadenosine/S-adenosylhomocysteine nucleosidase">
    <location>
        <begin position="1"/>
        <end position="231"/>
    </location>
</feature>
<feature type="active site" description="Proton acceptor" evidence="1">
    <location>
        <position position="12"/>
    </location>
</feature>
<feature type="active site" description="Proton donor" evidence="1">
    <location>
        <position position="198"/>
    </location>
</feature>
<feature type="binding site" evidence="1">
    <location>
        <position position="78"/>
    </location>
    <ligand>
        <name>substrate</name>
    </ligand>
</feature>
<feature type="binding site" evidence="1">
    <location>
        <position position="153"/>
    </location>
    <ligand>
        <name>substrate</name>
    </ligand>
</feature>
<feature type="binding site" evidence="1">
    <location>
        <begin position="174"/>
        <end position="175"/>
    </location>
    <ligand>
        <name>substrate</name>
    </ligand>
</feature>
<evidence type="ECO:0000255" key="1">
    <source>
        <dbReference type="HAMAP-Rule" id="MF_01684"/>
    </source>
</evidence>